<feature type="chain" id="PRO_1000092189" description="Phosphoadenosine 5'-phosphosulfate reductase">
    <location>
        <begin position="1"/>
        <end position="253"/>
    </location>
</feature>
<feature type="active site" description="Nucleophile; cysteine thiosulfonate intermediate" evidence="1">
    <location>
        <position position="239"/>
    </location>
</feature>
<comment type="function">
    <text evidence="1">Catalyzes the formation of sulfite from phosphoadenosine 5'-phosphosulfate (PAPS) using thioredoxin as an electron donor.</text>
</comment>
<comment type="catalytic activity">
    <reaction evidence="1">
        <text>[thioredoxin]-disulfide + sulfite + adenosine 3',5'-bisphosphate + 2 H(+) = [thioredoxin]-dithiol + 3'-phosphoadenylyl sulfate</text>
        <dbReference type="Rhea" id="RHEA:11724"/>
        <dbReference type="Rhea" id="RHEA-COMP:10698"/>
        <dbReference type="Rhea" id="RHEA-COMP:10700"/>
        <dbReference type="ChEBI" id="CHEBI:15378"/>
        <dbReference type="ChEBI" id="CHEBI:17359"/>
        <dbReference type="ChEBI" id="CHEBI:29950"/>
        <dbReference type="ChEBI" id="CHEBI:50058"/>
        <dbReference type="ChEBI" id="CHEBI:58339"/>
        <dbReference type="ChEBI" id="CHEBI:58343"/>
        <dbReference type="EC" id="1.8.4.8"/>
    </reaction>
</comment>
<comment type="pathway">
    <text evidence="1">Sulfur metabolism; hydrogen sulfide biosynthesis; sulfite from sulfate: step 3/3.</text>
</comment>
<comment type="subcellular location">
    <subcellularLocation>
        <location evidence="1">Cytoplasm</location>
    </subcellularLocation>
</comment>
<comment type="similarity">
    <text evidence="1">Belongs to the PAPS reductase family. CysH subfamily.</text>
</comment>
<proteinExistence type="inferred from homology"/>
<sequence>MPKLQLSELLSLTKVEQTLRLAEVNVELEKLTAQERVVWALENLEGNPALSSSFGIQAAVMLQLVTEIKSDTPIILTDTGYLFPETYQFIDQLTDRLNLNLHVFTADESPNWQEARYGKLWEQGVEGIEKYNKLNKVQPMRRALDQLEVGIWFSGLRREQSGSRANLPILSIQNGVFKFLPVLDWTNKEVHYFLKEYDLPYHPLWDQGYLSVGDTHTTQKWEPGMSEEETRFFGLKRECGLHEDDGELGGSGI</sequence>
<gene>
    <name evidence="1" type="primary">cysH</name>
    <name type="ordered locus">VFMJ11_0299</name>
</gene>
<organism>
    <name type="scientific">Aliivibrio fischeri (strain MJ11)</name>
    <name type="common">Vibrio fischeri</name>
    <dbReference type="NCBI Taxonomy" id="388396"/>
    <lineage>
        <taxon>Bacteria</taxon>
        <taxon>Pseudomonadati</taxon>
        <taxon>Pseudomonadota</taxon>
        <taxon>Gammaproteobacteria</taxon>
        <taxon>Vibrionales</taxon>
        <taxon>Vibrionaceae</taxon>
        <taxon>Aliivibrio</taxon>
    </lineage>
</organism>
<dbReference type="EC" id="1.8.4.8" evidence="1"/>
<dbReference type="EMBL" id="CP001139">
    <property type="protein sequence ID" value="ACH64931.1"/>
    <property type="molecule type" value="Genomic_DNA"/>
</dbReference>
<dbReference type="RefSeq" id="WP_012532711.1">
    <property type="nucleotide sequence ID" value="NC_011184.1"/>
</dbReference>
<dbReference type="SMR" id="B5FGJ0"/>
<dbReference type="KEGG" id="vfm:VFMJ11_0299"/>
<dbReference type="HOGENOM" id="CLU_044089_3_0_6"/>
<dbReference type="UniPathway" id="UPA00140">
    <property type="reaction ID" value="UER00206"/>
</dbReference>
<dbReference type="Proteomes" id="UP000001857">
    <property type="component" value="Chromosome I"/>
</dbReference>
<dbReference type="GO" id="GO:0005737">
    <property type="term" value="C:cytoplasm"/>
    <property type="evidence" value="ECO:0007669"/>
    <property type="project" value="UniProtKB-SubCell"/>
</dbReference>
<dbReference type="GO" id="GO:0004604">
    <property type="term" value="F:phosphoadenylyl-sulfate reductase (thioredoxin) activity"/>
    <property type="evidence" value="ECO:0007669"/>
    <property type="project" value="UniProtKB-UniRule"/>
</dbReference>
<dbReference type="GO" id="GO:0070814">
    <property type="term" value="P:hydrogen sulfide biosynthetic process"/>
    <property type="evidence" value="ECO:0007669"/>
    <property type="project" value="UniProtKB-UniRule"/>
</dbReference>
<dbReference type="GO" id="GO:0019379">
    <property type="term" value="P:sulfate assimilation, phosphoadenylyl sulfate reduction by phosphoadenylyl-sulfate reductase (thioredoxin)"/>
    <property type="evidence" value="ECO:0007669"/>
    <property type="project" value="UniProtKB-UniRule"/>
</dbReference>
<dbReference type="CDD" id="cd23945">
    <property type="entry name" value="PAPS_reductase"/>
    <property type="match status" value="1"/>
</dbReference>
<dbReference type="FunFam" id="3.40.50.620:FF:000043">
    <property type="entry name" value="Phosphoadenosine phosphosulfate reductase"/>
    <property type="match status" value="1"/>
</dbReference>
<dbReference type="Gene3D" id="3.40.50.620">
    <property type="entry name" value="HUPs"/>
    <property type="match status" value="1"/>
</dbReference>
<dbReference type="HAMAP" id="MF_00063">
    <property type="entry name" value="CysH"/>
    <property type="match status" value="1"/>
</dbReference>
<dbReference type="InterPro" id="IPR004511">
    <property type="entry name" value="PAPS/APS_Rdtase"/>
</dbReference>
<dbReference type="InterPro" id="IPR002500">
    <property type="entry name" value="PAPS_reduct_dom"/>
</dbReference>
<dbReference type="InterPro" id="IPR011800">
    <property type="entry name" value="PAPS_reductase_CysH"/>
</dbReference>
<dbReference type="InterPro" id="IPR014729">
    <property type="entry name" value="Rossmann-like_a/b/a_fold"/>
</dbReference>
<dbReference type="NCBIfam" id="TIGR00434">
    <property type="entry name" value="cysH"/>
    <property type="match status" value="1"/>
</dbReference>
<dbReference type="NCBIfam" id="TIGR02057">
    <property type="entry name" value="PAPS_reductase"/>
    <property type="match status" value="1"/>
</dbReference>
<dbReference type="NCBIfam" id="NF002537">
    <property type="entry name" value="PRK02090.1"/>
    <property type="match status" value="1"/>
</dbReference>
<dbReference type="PANTHER" id="PTHR46509">
    <property type="entry name" value="PHOSPHOADENOSINE PHOSPHOSULFATE REDUCTASE"/>
    <property type="match status" value="1"/>
</dbReference>
<dbReference type="PANTHER" id="PTHR46509:SF1">
    <property type="entry name" value="PHOSPHOADENOSINE PHOSPHOSULFATE REDUCTASE"/>
    <property type="match status" value="1"/>
</dbReference>
<dbReference type="Pfam" id="PF01507">
    <property type="entry name" value="PAPS_reduct"/>
    <property type="match status" value="1"/>
</dbReference>
<dbReference type="PIRSF" id="PIRSF000857">
    <property type="entry name" value="PAPS_reductase"/>
    <property type="match status" value="1"/>
</dbReference>
<dbReference type="SUPFAM" id="SSF52402">
    <property type="entry name" value="Adenine nucleotide alpha hydrolases-like"/>
    <property type="match status" value="1"/>
</dbReference>
<accession>B5FGJ0</accession>
<keyword id="KW-0963">Cytoplasm</keyword>
<keyword id="KW-0560">Oxidoreductase</keyword>
<reference key="1">
    <citation type="submission" date="2008-08" db="EMBL/GenBank/DDBJ databases">
        <title>Complete sequence of Vibrio fischeri strain MJ11.</title>
        <authorList>
            <person name="Mandel M.J."/>
            <person name="Stabb E.V."/>
            <person name="Ruby E.G."/>
            <person name="Ferriera S."/>
            <person name="Johnson J."/>
            <person name="Kravitz S."/>
            <person name="Beeson K."/>
            <person name="Sutton G."/>
            <person name="Rogers Y.-H."/>
            <person name="Friedman R."/>
            <person name="Frazier M."/>
            <person name="Venter J.C."/>
        </authorList>
    </citation>
    <scope>NUCLEOTIDE SEQUENCE [LARGE SCALE GENOMIC DNA]</scope>
    <source>
        <strain>MJ11</strain>
    </source>
</reference>
<name>CYSH_ALIFM</name>
<protein>
    <recommendedName>
        <fullName evidence="1">Phosphoadenosine 5'-phosphosulfate reductase</fullName>
        <shortName evidence="1">PAPS reductase</shortName>
        <ecNumber evidence="1">1.8.4.8</ecNumber>
    </recommendedName>
    <alternativeName>
        <fullName evidence="1">3'-phosphoadenylylsulfate reductase</fullName>
    </alternativeName>
    <alternativeName>
        <fullName evidence="1">PAPS reductase, thioredoxin dependent</fullName>
    </alternativeName>
    <alternativeName>
        <fullName evidence="1">PAPS sulfotransferase</fullName>
    </alternativeName>
    <alternativeName>
        <fullName evidence="1">PAdoPS reductase</fullName>
    </alternativeName>
</protein>
<evidence type="ECO:0000255" key="1">
    <source>
        <dbReference type="HAMAP-Rule" id="MF_00063"/>
    </source>
</evidence>